<protein>
    <recommendedName>
        <fullName evidence="1">Large ribosomal subunit protein uL18</fullName>
    </recommendedName>
    <alternativeName>
        <fullName evidence="2">50S ribosomal protein L18</fullName>
    </alternativeName>
</protein>
<feature type="chain" id="PRO_0000131267" description="Large ribosomal subunit protein uL18">
    <location>
        <begin position="1"/>
        <end position="120"/>
    </location>
</feature>
<organism>
    <name type="scientific">Geobacillus kaustophilus (strain HTA426)</name>
    <dbReference type="NCBI Taxonomy" id="235909"/>
    <lineage>
        <taxon>Bacteria</taxon>
        <taxon>Bacillati</taxon>
        <taxon>Bacillota</taxon>
        <taxon>Bacilli</taxon>
        <taxon>Bacillales</taxon>
        <taxon>Anoxybacillaceae</taxon>
        <taxon>Geobacillus</taxon>
        <taxon>Geobacillus thermoleovorans group</taxon>
    </lineage>
</organism>
<gene>
    <name evidence="1" type="primary">rplR</name>
    <name type="ordered locus">GK0122</name>
</gene>
<name>RL18_GEOKA</name>
<keyword id="KW-1185">Reference proteome</keyword>
<keyword id="KW-0687">Ribonucleoprotein</keyword>
<keyword id="KW-0689">Ribosomal protein</keyword>
<keyword id="KW-0694">RNA-binding</keyword>
<keyword id="KW-0699">rRNA-binding</keyword>
<dbReference type="EMBL" id="BA000043">
    <property type="protein sequence ID" value="BAD74407.1"/>
    <property type="molecule type" value="Genomic_DNA"/>
</dbReference>
<dbReference type="RefSeq" id="WP_011229635.1">
    <property type="nucleotide sequence ID" value="NC_006510.1"/>
</dbReference>
<dbReference type="BMRB" id="Q5L3S3"/>
<dbReference type="SMR" id="Q5L3S3"/>
<dbReference type="STRING" id="235909.GK0122"/>
<dbReference type="GeneID" id="32062110"/>
<dbReference type="KEGG" id="gka:GK0122"/>
<dbReference type="eggNOG" id="COG0256">
    <property type="taxonomic scope" value="Bacteria"/>
</dbReference>
<dbReference type="HOGENOM" id="CLU_098841_0_1_9"/>
<dbReference type="Proteomes" id="UP000001172">
    <property type="component" value="Chromosome"/>
</dbReference>
<dbReference type="GO" id="GO:0022625">
    <property type="term" value="C:cytosolic large ribosomal subunit"/>
    <property type="evidence" value="ECO:0007669"/>
    <property type="project" value="TreeGrafter"/>
</dbReference>
<dbReference type="GO" id="GO:0008097">
    <property type="term" value="F:5S rRNA binding"/>
    <property type="evidence" value="ECO:0007669"/>
    <property type="project" value="TreeGrafter"/>
</dbReference>
<dbReference type="GO" id="GO:0003735">
    <property type="term" value="F:structural constituent of ribosome"/>
    <property type="evidence" value="ECO:0007669"/>
    <property type="project" value="InterPro"/>
</dbReference>
<dbReference type="GO" id="GO:0006412">
    <property type="term" value="P:translation"/>
    <property type="evidence" value="ECO:0007669"/>
    <property type="project" value="UniProtKB-UniRule"/>
</dbReference>
<dbReference type="CDD" id="cd00432">
    <property type="entry name" value="Ribosomal_L18_L5e"/>
    <property type="match status" value="1"/>
</dbReference>
<dbReference type="FunFam" id="3.30.420.100:FF:000001">
    <property type="entry name" value="50S ribosomal protein L18"/>
    <property type="match status" value="1"/>
</dbReference>
<dbReference type="Gene3D" id="3.30.420.100">
    <property type="match status" value="1"/>
</dbReference>
<dbReference type="HAMAP" id="MF_01337_B">
    <property type="entry name" value="Ribosomal_uL18_B"/>
    <property type="match status" value="1"/>
</dbReference>
<dbReference type="InterPro" id="IPR004389">
    <property type="entry name" value="Ribosomal_uL18_bac-type"/>
</dbReference>
<dbReference type="InterPro" id="IPR005484">
    <property type="entry name" value="Ribosomal_uL18_bac/euk"/>
</dbReference>
<dbReference type="NCBIfam" id="TIGR00060">
    <property type="entry name" value="L18_bact"/>
    <property type="match status" value="1"/>
</dbReference>
<dbReference type="PANTHER" id="PTHR12899">
    <property type="entry name" value="39S RIBOSOMAL PROTEIN L18, MITOCHONDRIAL"/>
    <property type="match status" value="1"/>
</dbReference>
<dbReference type="PANTHER" id="PTHR12899:SF3">
    <property type="entry name" value="LARGE RIBOSOMAL SUBUNIT PROTEIN UL18M"/>
    <property type="match status" value="1"/>
</dbReference>
<dbReference type="Pfam" id="PF00861">
    <property type="entry name" value="Ribosomal_L18p"/>
    <property type="match status" value="1"/>
</dbReference>
<dbReference type="SUPFAM" id="SSF53137">
    <property type="entry name" value="Translational machinery components"/>
    <property type="match status" value="1"/>
</dbReference>
<evidence type="ECO:0000255" key="1">
    <source>
        <dbReference type="HAMAP-Rule" id="MF_01337"/>
    </source>
</evidence>
<evidence type="ECO:0000305" key="2"/>
<accession>Q5L3S3</accession>
<proteinExistence type="inferred from homology"/>
<comment type="function">
    <text evidence="1">This is one of the proteins that bind and probably mediate the attachment of the 5S RNA into the large ribosomal subunit, where it forms part of the central protuberance.</text>
</comment>
<comment type="subunit">
    <text evidence="1">Part of the 50S ribosomal subunit; part of the 5S rRNA/L5/L18/L25 subcomplex. Contacts the 5S and 23S rRNAs.</text>
</comment>
<comment type="similarity">
    <text evidence="1">Belongs to the universal ribosomal protein uL18 family.</text>
</comment>
<sequence>MITKVDRNAVRKKRHARIRKKIFGTAERPRLSVFRSNKHIYAQIIDDTKSSTIVSASTLDKEFGLDSTNNIEAAKKVGELVAKRALEKGIKKVVFDRGGYLYHGRVKALADAAREAGLEF</sequence>
<reference key="1">
    <citation type="journal article" date="2004" name="Nucleic Acids Res.">
        <title>Thermoadaptation trait revealed by the genome sequence of thermophilic Geobacillus kaustophilus.</title>
        <authorList>
            <person name="Takami H."/>
            <person name="Takaki Y."/>
            <person name="Chee G.-J."/>
            <person name="Nishi S."/>
            <person name="Shimamura S."/>
            <person name="Suzuki H."/>
            <person name="Matsui S."/>
            <person name="Uchiyama I."/>
        </authorList>
    </citation>
    <scope>NUCLEOTIDE SEQUENCE [LARGE SCALE GENOMIC DNA]</scope>
    <source>
        <strain>HTA426</strain>
    </source>
</reference>